<feature type="chain" id="PRO_0000177592" description="Translation initiation factor IF-3">
    <location>
        <begin position="1"/>
        <end position="176"/>
    </location>
</feature>
<proteinExistence type="inferred from homology"/>
<comment type="function">
    <text evidence="1">IF-3 binds to the 30S ribosomal subunit and shifts the equilibrium between 70S ribosomes and their 50S and 30S subunits in favor of the free subunits, thus enhancing the availability of 30S subunits on which protein synthesis initiation begins.</text>
</comment>
<comment type="subunit">
    <text evidence="1">Monomer.</text>
</comment>
<comment type="subcellular location">
    <subcellularLocation>
        <location evidence="1">Cytoplasm</location>
    </subcellularLocation>
</comment>
<comment type="similarity">
    <text evidence="1">Belongs to the IF-3 family.</text>
</comment>
<organism>
    <name type="scientific">Streptococcus pyogenes serotype M6 (strain ATCC BAA-946 / MGAS10394)</name>
    <dbReference type="NCBI Taxonomy" id="286636"/>
    <lineage>
        <taxon>Bacteria</taxon>
        <taxon>Bacillati</taxon>
        <taxon>Bacillota</taxon>
        <taxon>Bacilli</taxon>
        <taxon>Lactobacillales</taxon>
        <taxon>Streptococcaceae</taxon>
        <taxon>Streptococcus</taxon>
    </lineage>
</organism>
<dbReference type="EMBL" id="CP000003">
    <property type="protein sequence ID" value="AAT86771.1"/>
    <property type="molecule type" value="Genomic_DNA"/>
</dbReference>
<dbReference type="RefSeq" id="WP_002985152.1">
    <property type="nucleotide sequence ID" value="NC_006086.1"/>
</dbReference>
<dbReference type="SMR" id="Q5XCU2"/>
<dbReference type="GeneID" id="69901077"/>
<dbReference type="KEGG" id="spa:M6_Spy0636"/>
<dbReference type="HOGENOM" id="CLU_054919_3_2_9"/>
<dbReference type="Proteomes" id="UP000001167">
    <property type="component" value="Chromosome"/>
</dbReference>
<dbReference type="GO" id="GO:0005829">
    <property type="term" value="C:cytosol"/>
    <property type="evidence" value="ECO:0007669"/>
    <property type="project" value="TreeGrafter"/>
</dbReference>
<dbReference type="GO" id="GO:0016020">
    <property type="term" value="C:membrane"/>
    <property type="evidence" value="ECO:0007669"/>
    <property type="project" value="TreeGrafter"/>
</dbReference>
<dbReference type="GO" id="GO:0043022">
    <property type="term" value="F:ribosome binding"/>
    <property type="evidence" value="ECO:0007669"/>
    <property type="project" value="TreeGrafter"/>
</dbReference>
<dbReference type="GO" id="GO:0003743">
    <property type="term" value="F:translation initiation factor activity"/>
    <property type="evidence" value="ECO:0007669"/>
    <property type="project" value="UniProtKB-UniRule"/>
</dbReference>
<dbReference type="GO" id="GO:0032790">
    <property type="term" value="P:ribosome disassembly"/>
    <property type="evidence" value="ECO:0007669"/>
    <property type="project" value="TreeGrafter"/>
</dbReference>
<dbReference type="FunFam" id="3.10.20.80:FF:000001">
    <property type="entry name" value="Translation initiation factor IF-3"/>
    <property type="match status" value="1"/>
</dbReference>
<dbReference type="FunFam" id="3.30.110.10:FF:000001">
    <property type="entry name" value="Translation initiation factor IF-3"/>
    <property type="match status" value="1"/>
</dbReference>
<dbReference type="Gene3D" id="3.30.110.10">
    <property type="entry name" value="Translation initiation factor 3 (IF-3), C-terminal domain"/>
    <property type="match status" value="1"/>
</dbReference>
<dbReference type="Gene3D" id="3.10.20.80">
    <property type="entry name" value="Translation initiation factor 3 (IF-3), N-terminal domain"/>
    <property type="match status" value="1"/>
</dbReference>
<dbReference type="HAMAP" id="MF_00080">
    <property type="entry name" value="IF_3"/>
    <property type="match status" value="1"/>
</dbReference>
<dbReference type="InterPro" id="IPR036788">
    <property type="entry name" value="T_IF-3_C_sf"/>
</dbReference>
<dbReference type="InterPro" id="IPR036787">
    <property type="entry name" value="T_IF-3_N_sf"/>
</dbReference>
<dbReference type="InterPro" id="IPR019813">
    <property type="entry name" value="Translation_initiation_fac3_CS"/>
</dbReference>
<dbReference type="InterPro" id="IPR001288">
    <property type="entry name" value="Translation_initiation_fac_3"/>
</dbReference>
<dbReference type="InterPro" id="IPR019815">
    <property type="entry name" value="Translation_initiation_fac_3_C"/>
</dbReference>
<dbReference type="InterPro" id="IPR019814">
    <property type="entry name" value="Translation_initiation_fac_3_N"/>
</dbReference>
<dbReference type="NCBIfam" id="TIGR00168">
    <property type="entry name" value="infC"/>
    <property type="match status" value="1"/>
</dbReference>
<dbReference type="PANTHER" id="PTHR10938">
    <property type="entry name" value="TRANSLATION INITIATION FACTOR IF-3"/>
    <property type="match status" value="1"/>
</dbReference>
<dbReference type="PANTHER" id="PTHR10938:SF0">
    <property type="entry name" value="TRANSLATION INITIATION FACTOR IF-3, MITOCHONDRIAL"/>
    <property type="match status" value="1"/>
</dbReference>
<dbReference type="Pfam" id="PF00707">
    <property type="entry name" value="IF3_C"/>
    <property type="match status" value="1"/>
</dbReference>
<dbReference type="Pfam" id="PF05198">
    <property type="entry name" value="IF3_N"/>
    <property type="match status" value="1"/>
</dbReference>
<dbReference type="SUPFAM" id="SSF55200">
    <property type="entry name" value="Translation initiation factor IF3, C-terminal domain"/>
    <property type="match status" value="1"/>
</dbReference>
<dbReference type="SUPFAM" id="SSF54364">
    <property type="entry name" value="Translation initiation factor IF3, N-terminal domain"/>
    <property type="match status" value="1"/>
</dbReference>
<dbReference type="PROSITE" id="PS00938">
    <property type="entry name" value="IF3"/>
    <property type="match status" value="1"/>
</dbReference>
<protein>
    <recommendedName>
        <fullName evidence="1">Translation initiation factor IF-3</fullName>
    </recommendedName>
</protein>
<keyword id="KW-0963">Cytoplasm</keyword>
<keyword id="KW-0396">Initiation factor</keyword>
<keyword id="KW-0648">Protein biosynthesis</keyword>
<sequence length="176" mass="20054">MKIIAKKDLFINDEIRVREVRLVGLEGEQLGIKPLSEAQSLADASNVDLVLIQPQAVPPVAKLMDYGKFKFEYQKKQKEQRKKQSVVTVKEVRLSPVIDKGDFETKLRNGRKFLEKGNKVKVSIRFKGRMITHKEIGAKVLADFAEATQDIAIIEQRAKMDGRQMFMQLAPISDKK</sequence>
<evidence type="ECO:0000255" key="1">
    <source>
        <dbReference type="HAMAP-Rule" id="MF_00080"/>
    </source>
</evidence>
<accession>Q5XCU2</accession>
<name>IF3_STRP6</name>
<gene>
    <name evidence="1" type="primary">infC</name>
    <name type="ordered locus">M6_Spy0636</name>
</gene>
<reference key="1">
    <citation type="journal article" date="2004" name="J. Infect. Dis.">
        <title>Progress toward characterization of the group A Streptococcus metagenome: complete genome sequence of a macrolide-resistant serotype M6 strain.</title>
        <authorList>
            <person name="Banks D.J."/>
            <person name="Porcella S.F."/>
            <person name="Barbian K.D."/>
            <person name="Beres S.B."/>
            <person name="Philips L.E."/>
            <person name="Voyich J.M."/>
            <person name="DeLeo F.R."/>
            <person name="Martin J.M."/>
            <person name="Somerville G.A."/>
            <person name="Musser J.M."/>
        </authorList>
    </citation>
    <scope>NUCLEOTIDE SEQUENCE [LARGE SCALE GENOMIC DNA]</scope>
    <source>
        <strain>ATCC BAA-946 / MGAS10394</strain>
    </source>
</reference>